<accession>P0DOA7</accession>
<accession>L0TEQ6</accession>
<accession>O08120</accession>
<accession>O08122</accession>
<accession>P96364</accession>
<accession>P9WNK1</accession>
<accession>Q9L781</accession>
<protein>
    <recommendedName>
        <fullName evidence="3">ESAT-6-like protein EsxV</fullName>
    </recommendedName>
    <alternativeName>
        <fullName>Antigen Mtb9.9B</fullName>
    </alternativeName>
</protein>
<sequence>MTINYQFGDVDAHGAMIRAQAGSLEAEHQAIISDVLTASDFWGGAGSAACQGFITQLGRNFQVIYEQANAHGQKVQAAGNNMAQTDSAVGSSWA</sequence>
<organism>
    <name type="scientific">Mycobacterium tuberculosis (strain ATCC 25618 / H37Rv)</name>
    <dbReference type="NCBI Taxonomy" id="83332"/>
    <lineage>
        <taxon>Bacteria</taxon>
        <taxon>Bacillati</taxon>
        <taxon>Actinomycetota</taxon>
        <taxon>Actinomycetes</taxon>
        <taxon>Mycobacteriales</taxon>
        <taxon>Mycobacteriaceae</taxon>
        <taxon>Mycobacterium</taxon>
        <taxon>Mycobacterium tuberculosis complex</taxon>
    </lineage>
</organism>
<keyword id="KW-1185">Reference proteome</keyword>
<keyword id="KW-0964">Secreted</keyword>
<keyword id="KW-0843">Virulence</keyword>
<comment type="function">
    <text evidence="1">Probable virulence factor. In mice, elicits increased levels of IFN-gamma, IL-12 and IgG(2a), indicating a dominant Th1 host immune response.</text>
</comment>
<comment type="subunit">
    <text evidence="1">Forms a tight 1:1 complex with EsxW. The complex is destabilized at low pH. Unfolding of the proteins is required for dissociation of the complex and membrane binding.</text>
</comment>
<comment type="subcellular location">
    <subcellularLocation>
        <location evidence="4">Secreted</location>
    </subcellularLocation>
    <text evidence="4 5">Probably secreted via the ESX-5 / type VII secretion system (T7SS) (Probable). May bind to lipid membranes after dissociation of the complex (Probable).</text>
</comment>
<comment type="miscellaneous">
    <text evidence="5">Potent T-cell antigen that could be a subunit vaccine candidate.</text>
</comment>
<comment type="similarity">
    <text evidence="4">Belongs to the WXG100 family. ESAT-6 subfamily.</text>
</comment>
<name>ESXV_MYCTU</name>
<gene>
    <name evidence="2" type="primary">esxV</name>
    <name type="ordered locus">Rv3619c</name>
    <name type="ORF">MTCY07H7B.03</name>
    <name type="ORF">MTCY15C10.33</name>
</gene>
<reference key="1">
    <citation type="journal article" date="2000" name="J. Exp. Med.">
        <title>Expression cloning of an immunodominant family of Mycobacterium tuberculosis antigens using human CD4(+) T cells.</title>
        <authorList>
            <person name="Alderson M.R."/>
            <person name="Bement T."/>
            <person name="Day C.H."/>
            <person name="Zhu L."/>
            <person name="Molesh D."/>
            <person name="Skeiky Y.A.W."/>
            <person name="Coler R."/>
            <person name="Lewinsohn D.M."/>
            <person name="Reed S.G."/>
            <person name="Dillon D.C."/>
        </authorList>
    </citation>
    <scope>NUCLEOTIDE SEQUENCE [GENOMIC DNA]</scope>
    <source>
        <strain>ATCC 35801 / TMC 107 / Erdman</strain>
    </source>
</reference>
<reference key="2">
    <citation type="journal article" date="1998" name="Nature">
        <title>Deciphering the biology of Mycobacterium tuberculosis from the complete genome sequence.</title>
        <authorList>
            <person name="Cole S.T."/>
            <person name="Brosch R."/>
            <person name="Parkhill J."/>
            <person name="Garnier T."/>
            <person name="Churcher C.M."/>
            <person name="Harris D.E."/>
            <person name="Gordon S.V."/>
            <person name="Eiglmeier K."/>
            <person name="Gas S."/>
            <person name="Barry C.E. III"/>
            <person name="Tekaia F."/>
            <person name="Badcock K."/>
            <person name="Basham D."/>
            <person name="Brown D."/>
            <person name="Chillingworth T."/>
            <person name="Connor R."/>
            <person name="Davies R.M."/>
            <person name="Devlin K."/>
            <person name="Feltwell T."/>
            <person name="Gentles S."/>
            <person name="Hamlin N."/>
            <person name="Holroyd S."/>
            <person name="Hornsby T."/>
            <person name="Jagels K."/>
            <person name="Krogh A."/>
            <person name="McLean J."/>
            <person name="Moule S."/>
            <person name="Murphy L.D."/>
            <person name="Oliver S."/>
            <person name="Osborne J."/>
            <person name="Quail M.A."/>
            <person name="Rajandream M.A."/>
            <person name="Rogers J."/>
            <person name="Rutter S."/>
            <person name="Seeger K."/>
            <person name="Skelton S."/>
            <person name="Squares S."/>
            <person name="Squares R."/>
            <person name="Sulston J.E."/>
            <person name="Taylor K."/>
            <person name="Whitehead S."/>
            <person name="Barrell B.G."/>
        </authorList>
    </citation>
    <scope>NUCLEOTIDE SEQUENCE [LARGE SCALE GENOMIC DNA]</scope>
    <source>
        <strain>ATCC 25618 / H37Rv</strain>
    </source>
</reference>
<reference key="3">
    <citation type="journal article" date="2009" name="PLoS Pathog.">
        <title>Systematic genetic nomenclature for type VII secretion systems.</title>
        <authorList>
            <person name="Bitter W."/>
            <person name="Houben E.N."/>
            <person name="Bottai D."/>
            <person name="Brodin P."/>
            <person name="Brown E.J."/>
            <person name="Cox J.S."/>
            <person name="Derbyshire K."/>
            <person name="Fortune S.M."/>
            <person name="Gao L.Y."/>
            <person name="Liu J."/>
            <person name="Gey van Pittius N.C."/>
            <person name="Pym A.S."/>
            <person name="Rubin E.J."/>
            <person name="Sherman D.R."/>
            <person name="Cole S.T."/>
            <person name="Brosch R."/>
        </authorList>
    </citation>
    <scope>NOMENCLATURE</scope>
</reference>
<reference key="4">
    <citation type="journal article" date="2011" name="FEBS J.">
        <title>Molecular characterization of secretory proteins Rv3619c and Rv3620c from Mycobacterium tuberculosis H37Rv.</title>
        <authorList>
            <person name="Mahmood A."/>
            <person name="Srivastava S."/>
            <person name="Tripathi S."/>
            <person name="Ansari M.A."/>
            <person name="Owais M."/>
            <person name="Arora A."/>
        </authorList>
    </citation>
    <scope>FUNCTION IN VIRULENCE</scope>
    <scope>INTERACTION WITH ESXW</scope>
    <scope>SUBCELLULAR LOCATION</scope>
    <source>
        <strain>H37Rv</strain>
    </source>
</reference>
<evidence type="ECO:0000269" key="1">
    <source>
    </source>
</evidence>
<evidence type="ECO:0000303" key="2">
    <source>
    </source>
</evidence>
<evidence type="ECO:0000305" key="3"/>
<evidence type="ECO:0000305" key="4">
    <source>
    </source>
</evidence>
<evidence type="ECO:0000305" key="5">
    <source>
    </source>
</evidence>
<feature type="chain" id="PRO_0000436928" description="ESAT-6-like protein EsxV">
    <location>
        <begin position="1"/>
        <end position="94"/>
    </location>
</feature>
<feature type="sequence conflict" description="In Ref. 1; AAF32406." evidence="3" ref="1">
    <original>Q</original>
    <variation>L</variation>
    <location>
        <position position="20"/>
    </location>
</feature>
<feature type="sequence conflict" description="In Ref. 1; AAF32406." evidence="3" ref="1">
    <original>S</original>
    <variation>L</variation>
    <location>
        <position position="23"/>
    </location>
</feature>
<proteinExistence type="evidence at protein level"/>
<dbReference type="EMBL" id="AF226277">
    <property type="protein sequence ID" value="AAF32406.1"/>
    <property type="molecule type" value="Genomic_DNA"/>
</dbReference>
<dbReference type="EMBL" id="AL123456">
    <property type="protein sequence ID" value="CCP46442.1"/>
    <property type="molecule type" value="Genomic_DNA"/>
</dbReference>
<dbReference type="PIR" id="D70560">
    <property type="entry name" value="D70560"/>
</dbReference>
<dbReference type="RefSeq" id="NP_218136.1">
    <property type="nucleotide sequence ID" value="NC_000962.3"/>
</dbReference>
<dbReference type="RefSeq" id="WP_003898699.1">
    <property type="nucleotide sequence ID" value="NZ_NVQJ01000149.1"/>
</dbReference>
<dbReference type="SMR" id="P0DOA7"/>
<dbReference type="DNASU" id="888299"/>
<dbReference type="GeneID" id="885328"/>
<dbReference type="KEGG" id="mtu:Rv1037c"/>
<dbReference type="KEGG" id="mtu:Rv3619c"/>
<dbReference type="KEGG" id="mtv:RVBD_1037c"/>
<dbReference type="KEGG" id="mtv:RVBD_3619c"/>
<dbReference type="TubercuList" id="Rv3619c"/>
<dbReference type="InParanoid" id="P0DOA7"/>
<dbReference type="OrthoDB" id="4625013at2"/>
<dbReference type="PhylomeDB" id="P0DOA7"/>
<dbReference type="Proteomes" id="UP000001584">
    <property type="component" value="Chromosome"/>
</dbReference>
<dbReference type="GO" id="GO:0005576">
    <property type="term" value="C:extracellular region"/>
    <property type="evidence" value="ECO:0007669"/>
    <property type="project" value="UniProtKB-SubCell"/>
</dbReference>
<dbReference type="GO" id="GO:0009274">
    <property type="term" value="C:peptidoglycan-based cell wall"/>
    <property type="evidence" value="ECO:0000314"/>
    <property type="project" value="UniProtKB"/>
</dbReference>
<dbReference type="FunFam" id="1.10.287.1060:FF:000004">
    <property type="entry name" value="ESAT-6-like protein EsxI"/>
    <property type="match status" value="1"/>
</dbReference>
<dbReference type="Gene3D" id="1.10.287.1060">
    <property type="entry name" value="ESAT-6-like"/>
    <property type="match status" value="1"/>
</dbReference>
<dbReference type="InterPro" id="IPR009416">
    <property type="entry name" value="ESAT-6-like_Myco"/>
</dbReference>
<dbReference type="InterPro" id="IPR036689">
    <property type="entry name" value="ESAT-6-like_sf"/>
</dbReference>
<dbReference type="InterPro" id="IPR010310">
    <property type="entry name" value="T7SS_ESAT-6-like"/>
</dbReference>
<dbReference type="Pfam" id="PF06013">
    <property type="entry name" value="WXG100"/>
    <property type="match status" value="1"/>
</dbReference>
<dbReference type="PIRSF" id="PIRSF037656">
    <property type="entry name" value="DUF1066"/>
    <property type="match status" value="1"/>
</dbReference>
<dbReference type="SUPFAM" id="SSF140453">
    <property type="entry name" value="EsxAB dimer-like"/>
    <property type="match status" value="1"/>
</dbReference>